<organism>
    <name type="scientific">Dinoroseobacter shibae (strain DSM 16493 / NCIMB 14021 / DFL 12)</name>
    <dbReference type="NCBI Taxonomy" id="398580"/>
    <lineage>
        <taxon>Bacteria</taxon>
        <taxon>Pseudomonadati</taxon>
        <taxon>Pseudomonadota</taxon>
        <taxon>Alphaproteobacteria</taxon>
        <taxon>Rhodobacterales</taxon>
        <taxon>Roseobacteraceae</taxon>
        <taxon>Dinoroseobacter</taxon>
    </lineage>
</organism>
<reference key="1">
    <citation type="journal article" date="2010" name="ISME J.">
        <title>The complete genome sequence of the algal symbiont Dinoroseobacter shibae: a hitchhiker's guide to life in the sea.</title>
        <authorList>
            <person name="Wagner-Dobler I."/>
            <person name="Ballhausen B."/>
            <person name="Berger M."/>
            <person name="Brinkhoff T."/>
            <person name="Buchholz I."/>
            <person name="Bunk B."/>
            <person name="Cypionka H."/>
            <person name="Daniel R."/>
            <person name="Drepper T."/>
            <person name="Gerdts G."/>
            <person name="Hahnke S."/>
            <person name="Han C."/>
            <person name="Jahn D."/>
            <person name="Kalhoefer D."/>
            <person name="Kiss H."/>
            <person name="Klenk H.P."/>
            <person name="Kyrpides N."/>
            <person name="Liebl W."/>
            <person name="Liesegang H."/>
            <person name="Meincke L."/>
            <person name="Pati A."/>
            <person name="Petersen J."/>
            <person name="Piekarski T."/>
            <person name="Pommerenke C."/>
            <person name="Pradella S."/>
            <person name="Pukall R."/>
            <person name="Rabus R."/>
            <person name="Stackebrandt E."/>
            <person name="Thole S."/>
            <person name="Thompson L."/>
            <person name="Tielen P."/>
            <person name="Tomasch J."/>
            <person name="von Jan M."/>
            <person name="Wanphrut N."/>
            <person name="Wichels A."/>
            <person name="Zech H."/>
            <person name="Simon M."/>
        </authorList>
    </citation>
    <scope>NUCLEOTIDE SEQUENCE [LARGE SCALE GENOMIC DNA]</scope>
    <source>
        <strain>DSM 16493 / NCIMB 14021 / DFL 12</strain>
    </source>
</reference>
<evidence type="ECO:0000255" key="1">
    <source>
        <dbReference type="HAMAP-Rule" id="MF_00409"/>
    </source>
</evidence>
<comment type="function">
    <text evidence="1">Transfers the gamma-phosphate of ATP to the 4'-position of a tetraacyldisaccharide 1-phosphate intermediate (termed DS-1-P) to form tetraacyldisaccharide 1,4'-bis-phosphate (lipid IVA).</text>
</comment>
<comment type="catalytic activity">
    <reaction evidence="1">
        <text>a lipid A disaccharide + ATP = a lipid IVA + ADP + H(+)</text>
        <dbReference type="Rhea" id="RHEA:67840"/>
        <dbReference type="ChEBI" id="CHEBI:15378"/>
        <dbReference type="ChEBI" id="CHEBI:30616"/>
        <dbReference type="ChEBI" id="CHEBI:176343"/>
        <dbReference type="ChEBI" id="CHEBI:176425"/>
        <dbReference type="ChEBI" id="CHEBI:456216"/>
        <dbReference type="EC" id="2.7.1.130"/>
    </reaction>
</comment>
<comment type="pathway">
    <text evidence="1">Glycolipid biosynthesis; lipid IV(A) biosynthesis; lipid IV(A) from (3R)-3-hydroxytetradecanoyl-[acyl-carrier-protein] and UDP-N-acetyl-alpha-D-glucosamine: step 6/6.</text>
</comment>
<comment type="similarity">
    <text evidence="1">Belongs to the LpxK family.</text>
</comment>
<name>LPXK_DINSH</name>
<sequence>MRPPGFWHAPPDALGWRARALAPLGALYAAATARRVARPPAHRPGIPVICVGNINAGGTGKTPTVIALQMILAARGIAAHVVSRGYGGRLEGPVAVDPRRHDAAEVGDEPLLLAAFGPTWVARDRAAGARAAEGAGAQAILLDDGFQNPTLAKDLSLVVVDAQRGFGNGRVIPAGPLREPVARGLARADLLLTIGPPAAQARFDALWGPATVTLPHLRGALTPLQTGMRWEGLRAVAFAGIGHPQKFFDTLQDQGVILCATHPLDDHQPLDARLITRLLADAKAQGAQLVTTEKDAVRLPAELRGQVLSLPVRLALADDTALTAALDTLFPNATRRL</sequence>
<dbReference type="EC" id="2.7.1.130" evidence="1"/>
<dbReference type="EMBL" id="CP000830">
    <property type="protein sequence ID" value="ABV91780.1"/>
    <property type="molecule type" value="Genomic_DNA"/>
</dbReference>
<dbReference type="RefSeq" id="WP_012176713.1">
    <property type="nucleotide sequence ID" value="NC_009952.1"/>
</dbReference>
<dbReference type="SMR" id="A8LJV4"/>
<dbReference type="STRING" id="398580.Dshi_0031"/>
<dbReference type="KEGG" id="dsh:Dshi_0031"/>
<dbReference type="eggNOG" id="COG1663">
    <property type="taxonomic scope" value="Bacteria"/>
</dbReference>
<dbReference type="HOGENOM" id="CLU_038816_0_0_5"/>
<dbReference type="OrthoDB" id="9766423at2"/>
<dbReference type="UniPathway" id="UPA00359">
    <property type="reaction ID" value="UER00482"/>
</dbReference>
<dbReference type="Proteomes" id="UP000006833">
    <property type="component" value="Chromosome"/>
</dbReference>
<dbReference type="GO" id="GO:0005886">
    <property type="term" value="C:plasma membrane"/>
    <property type="evidence" value="ECO:0007669"/>
    <property type="project" value="TreeGrafter"/>
</dbReference>
<dbReference type="GO" id="GO:0005524">
    <property type="term" value="F:ATP binding"/>
    <property type="evidence" value="ECO:0007669"/>
    <property type="project" value="UniProtKB-UniRule"/>
</dbReference>
<dbReference type="GO" id="GO:0009029">
    <property type="term" value="F:tetraacyldisaccharide 4'-kinase activity"/>
    <property type="evidence" value="ECO:0007669"/>
    <property type="project" value="UniProtKB-UniRule"/>
</dbReference>
<dbReference type="GO" id="GO:0009245">
    <property type="term" value="P:lipid A biosynthetic process"/>
    <property type="evidence" value="ECO:0007669"/>
    <property type="project" value="UniProtKB-UniRule"/>
</dbReference>
<dbReference type="GO" id="GO:0009244">
    <property type="term" value="P:lipopolysaccharide core region biosynthetic process"/>
    <property type="evidence" value="ECO:0007669"/>
    <property type="project" value="TreeGrafter"/>
</dbReference>
<dbReference type="HAMAP" id="MF_00409">
    <property type="entry name" value="LpxK"/>
    <property type="match status" value="1"/>
</dbReference>
<dbReference type="InterPro" id="IPR003758">
    <property type="entry name" value="LpxK"/>
</dbReference>
<dbReference type="InterPro" id="IPR027417">
    <property type="entry name" value="P-loop_NTPase"/>
</dbReference>
<dbReference type="NCBIfam" id="TIGR00682">
    <property type="entry name" value="lpxK"/>
    <property type="match status" value="1"/>
</dbReference>
<dbReference type="PANTHER" id="PTHR42724">
    <property type="entry name" value="TETRAACYLDISACCHARIDE 4'-KINASE"/>
    <property type="match status" value="1"/>
</dbReference>
<dbReference type="PANTHER" id="PTHR42724:SF1">
    <property type="entry name" value="TETRAACYLDISACCHARIDE 4'-KINASE, MITOCHONDRIAL-RELATED"/>
    <property type="match status" value="1"/>
</dbReference>
<dbReference type="Pfam" id="PF02606">
    <property type="entry name" value="LpxK"/>
    <property type="match status" value="1"/>
</dbReference>
<dbReference type="SUPFAM" id="SSF52540">
    <property type="entry name" value="P-loop containing nucleoside triphosphate hydrolases"/>
    <property type="match status" value="1"/>
</dbReference>
<protein>
    <recommendedName>
        <fullName evidence="1">Tetraacyldisaccharide 4'-kinase</fullName>
        <ecNumber evidence="1">2.7.1.130</ecNumber>
    </recommendedName>
    <alternativeName>
        <fullName evidence="1">Lipid A 4'-kinase</fullName>
    </alternativeName>
</protein>
<accession>A8LJV4</accession>
<feature type="chain" id="PRO_0000340833" description="Tetraacyldisaccharide 4'-kinase">
    <location>
        <begin position="1"/>
        <end position="337"/>
    </location>
</feature>
<feature type="binding site" evidence="1">
    <location>
        <begin position="55"/>
        <end position="62"/>
    </location>
    <ligand>
        <name>ATP</name>
        <dbReference type="ChEBI" id="CHEBI:30616"/>
    </ligand>
</feature>
<proteinExistence type="inferred from homology"/>
<gene>
    <name evidence="1" type="primary">lpxK</name>
    <name type="ordered locus">Dshi_0031</name>
</gene>
<keyword id="KW-0067">ATP-binding</keyword>
<keyword id="KW-0418">Kinase</keyword>
<keyword id="KW-0441">Lipid A biosynthesis</keyword>
<keyword id="KW-0444">Lipid biosynthesis</keyword>
<keyword id="KW-0443">Lipid metabolism</keyword>
<keyword id="KW-0547">Nucleotide-binding</keyword>
<keyword id="KW-1185">Reference proteome</keyword>
<keyword id="KW-0808">Transferase</keyword>